<reference key="1">
    <citation type="journal article" date="2007" name="PLoS Biol.">
        <title>Evolution of symbiotic bacteria in the distal human intestine.</title>
        <authorList>
            <person name="Xu J."/>
            <person name="Mahowald M.A."/>
            <person name="Ley R.E."/>
            <person name="Lozupone C.A."/>
            <person name="Hamady M."/>
            <person name="Martens E.C."/>
            <person name="Henrissat B."/>
            <person name="Coutinho P.M."/>
            <person name="Minx P."/>
            <person name="Latreille P."/>
            <person name="Cordum H."/>
            <person name="Van Brunt A."/>
            <person name="Kim K."/>
            <person name="Fulton R.S."/>
            <person name="Fulton L.A."/>
            <person name="Clifton S.W."/>
            <person name="Wilson R.K."/>
            <person name="Knight R.D."/>
            <person name="Gordon J.I."/>
        </authorList>
    </citation>
    <scope>NUCLEOTIDE SEQUENCE [LARGE SCALE GENOMIC DNA]</scope>
    <source>
        <strain>ATCC 8482 / DSM 1447 / JCM 5826 / CCUG 4940 / NBRC 14291 / NCTC 11154</strain>
    </source>
</reference>
<comment type="function">
    <text evidence="1">Catalyzes the ATP-dependent phosphorylation of N-acetyl-L-glutamate.</text>
</comment>
<comment type="catalytic activity">
    <reaction evidence="1">
        <text>N-acetyl-L-glutamate + ATP = N-acetyl-L-glutamyl 5-phosphate + ADP</text>
        <dbReference type="Rhea" id="RHEA:14629"/>
        <dbReference type="ChEBI" id="CHEBI:30616"/>
        <dbReference type="ChEBI" id="CHEBI:44337"/>
        <dbReference type="ChEBI" id="CHEBI:57936"/>
        <dbReference type="ChEBI" id="CHEBI:456216"/>
        <dbReference type="EC" id="2.7.2.8"/>
    </reaction>
</comment>
<comment type="pathway">
    <text evidence="1">Amino-acid biosynthesis; L-arginine biosynthesis; N(2)-acetyl-L-ornithine from L-glutamate: step 2/4.</text>
</comment>
<comment type="subcellular location">
    <subcellularLocation>
        <location evidence="1">Cytoplasm</location>
    </subcellularLocation>
</comment>
<comment type="similarity">
    <text evidence="1">Belongs to the acetylglutamate kinase family. ArgB subfamily.</text>
</comment>
<sequence>MKEKLTIIKVGGKIVEEESTLNQLLADFSAIEGYKLLVHGGGRSATRLAAQLGIESKMVNGRRITDAETLKVVTMVYGGLVNKNIVAGLQAKGVNAIGLTGADMNVIRSVKRPVKDVDYGFVGDVEKVNAGFLAALIRQGIVPVMAPLTHDGKGSMLNTNADTIAGETAKALASLFDVTLVYCFEKKGVLRDENDDDSVIPVITPEEFKEFVAQGIIQGGMIPKLENSFSAIDAGVSQVVITLASAINEGSGTVIKK</sequence>
<name>ARGB_PHOV8</name>
<organism>
    <name type="scientific">Phocaeicola vulgatus (strain ATCC 8482 / DSM 1447 / JCM 5826 / CCUG 4940 / NBRC 14291 / NCTC 11154)</name>
    <name type="common">Bacteroides vulgatus</name>
    <dbReference type="NCBI Taxonomy" id="435590"/>
    <lineage>
        <taxon>Bacteria</taxon>
        <taxon>Pseudomonadati</taxon>
        <taxon>Bacteroidota</taxon>
        <taxon>Bacteroidia</taxon>
        <taxon>Bacteroidales</taxon>
        <taxon>Bacteroidaceae</taxon>
        <taxon>Phocaeicola</taxon>
    </lineage>
</organism>
<proteinExistence type="inferred from homology"/>
<evidence type="ECO:0000255" key="1">
    <source>
        <dbReference type="HAMAP-Rule" id="MF_00082"/>
    </source>
</evidence>
<gene>
    <name evidence="1" type="primary">argB</name>
    <name type="ordered locus">BVU_1338</name>
</gene>
<dbReference type="EC" id="2.7.2.8" evidence="1"/>
<dbReference type="EMBL" id="CP000139">
    <property type="protein sequence ID" value="ABR39027.1"/>
    <property type="molecule type" value="Genomic_DNA"/>
</dbReference>
<dbReference type="RefSeq" id="WP_011965143.1">
    <property type="nucleotide sequence ID" value="NZ_CAXVNH010000024.1"/>
</dbReference>
<dbReference type="SMR" id="A6L013"/>
<dbReference type="STRING" id="435590.BVU_1338"/>
<dbReference type="PaxDb" id="435590-BVU_1338"/>
<dbReference type="GeneID" id="5302304"/>
<dbReference type="KEGG" id="bvu:BVU_1338"/>
<dbReference type="eggNOG" id="COG0548">
    <property type="taxonomic scope" value="Bacteria"/>
</dbReference>
<dbReference type="HOGENOM" id="CLU_053680_1_0_10"/>
<dbReference type="BioCyc" id="BVUL435590:G1G59-1396-MONOMER"/>
<dbReference type="UniPathway" id="UPA00068">
    <property type="reaction ID" value="UER00107"/>
</dbReference>
<dbReference type="Proteomes" id="UP000002861">
    <property type="component" value="Chromosome"/>
</dbReference>
<dbReference type="GO" id="GO:0005737">
    <property type="term" value="C:cytoplasm"/>
    <property type="evidence" value="ECO:0007669"/>
    <property type="project" value="UniProtKB-SubCell"/>
</dbReference>
<dbReference type="GO" id="GO:0003991">
    <property type="term" value="F:acetylglutamate kinase activity"/>
    <property type="evidence" value="ECO:0007669"/>
    <property type="project" value="UniProtKB-UniRule"/>
</dbReference>
<dbReference type="GO" id="GO:0005524">
    <property type="term" value="F:ATP binding"/>
    <property type="evidence" value="ECO:0007669"/>
    <property type="project" value="UniProtKB-UniRule"/>
</dbReference>
<dbReference type="GO" id="GO:0042450">
    <property type="term" value="P:arginine biosynthetic process via ornithine"/>
    <property type="evidence" value="ECO:0007669"/>
    <property type="project" value="UniProtKB-UniRule"/>
</dbReference>
<dbReference type="GO" id="GO:0006526">
    <property type="term" value="P:L-arginine biosynthetic process"/>
    <property type="evidence" value="ECO:0007669"/>
    <property type="project" value="UniProtKB-UniPathway"/>
</dbReference>
<dbReference type="CDD" id="cd04238">
    <property type="entry name" value="AAK_NAGK-like"/>
    <property type="match status" value="1"/>
</dbReference>
<dbReference type="Gene3D" id="3.40.1160.10">
    <property type="entry name" value="Acetylglutamate kinase-like"/>
    <property type="match status" value="1"/>
</dbReference>
<dbReference type="HAMAP" id="MF_00082">
    <property type="entry name" value="ArgB"/>
    <property type="match status" value="1"/>
</dbReference>
<dbReference type="InterPro" id="IPR036393">
    <property type="entry name" value="AceGlu_kinase-like_sf"/>
</dbReference>
<dbReference type="InterPro" id="IPR004662">
    <property type="entry name" value="AcgluKinase_fam"/>
</dbReference>
<dbReference type="InterPro" id="IPR037528">
    <property type="entry name" value="ArgB"/>
</dbReference>
<dbReference type="InterPro" id="IPR001048">
    <property type="entry name" value="Asp/Glu/Uridylate_kinase"/>
</dbReference>
<dbReference type="NCBIfam" id="TIGR00761">
    <property type="entry name" value="argB"/>
    <property type="match status" value="1"/>
</dbReference>
<dbReference type="PANTHER" id="PTHR23342">
    <property type="entry name" value="N-ACETYLGLUTAMATE SYNTHASE"/>
    <property type="match status" value="1"/>
</dbReference>
<dbReference type="PANTHER" id="PTHR23342:SF0">
    <property type="entry name" value="N-ACETYLGLUTAMATE SYNTHASE, MITOCHONDRIAL"/>
    <property type="match status" value="1"/>
</dbReference>
<dbReference type="Pfam" id="PF00696">
    <property type="entry name" value="AA_kinase"/>
    <property type="match status" value="1"/>
</dbReference>
<dbReference type="PIRSF" id="PIRSF000728">
    <property type="entry name" value="NAGK"/>
    <property type="match status" value="1"/>
</dbReference>
<dbReference type="SUPFAM" id="SSF53633">
    <property type="entry name" value="Carbamate kinase-like"/>
    <property type="match status" value="1"/>
</dbReference>
<protein>
    <recommendedName>
        <fullName evidence="1">Acetylglutamate kinase</fullName>
        <ecNumber evidence="1">2.7.2.8</ecNumber>
    </recommendedName>
    <alternativeName>
        <fullName evidence="1">N-acetyl-L-glutamate 5-phosphotransferase</fullName>
    </alternativeName>
    <alternativeName>
        <fullName evidence="1">NAG kinase</fullName>
        <shortName evidence="1">NAGK</shortName>
    </alternativeName>
</protein>
<accession>A6L013</accession>
<keyword id="KW-0028">Amino-acid biosynthesis</keyword>
<keyword id="KW-0055">Arginine biosynthesis</keyword>
<keyword id="KW-0067">ATP-binding</keyword>
<keyword id="KW-0963">Cytoplasm</keyword>
<keyword id="KW-0418">Kinase</keyword>
<keyword id="KW-0547">Nucleotide-binding</keyword>
<keyword id="KW-0808">Transferase</keyword>
<feature type="chain" id="PRO_1000010484" description="Acetylglutamate kinase">
    <location>
        <begin position="1"/>
        <end position="257"/>
    </location>
</feature>
<feature type="binding site" evidence="1">
    <location>
        <begin position="41"/>
        <end position="42"/>
    </location>
    <ligand>
        <name>substrate</name>
    </ligand>
</feature>
<feature type="binding site" evidence="1">
    <location>
        <position position="63"/>
    </location>
    <ligand>
        <name>substrate</name>
    </ligand>
</feature>
<feature type="binding site" evidence="1">
    <location>
        <position position="158"/>
    </location>
    <ligand>
        <name>substrate</name>
    </ligand>
</feature>
<feature type="site" description="Transition state stabilizer" evidence="1">
    <location>
        <position position="9"/>
    </location>
</feature>
<feature type="site" description="Transition state stabilizer" evidence="1">
    <location>
        <position position="224"/>
    </location>
</feature>